<keyword id="KW-0963">Cytoplasm</keyword>
<keyword id="KW-0350">Heme biosynthesis</keyword>
<keyword id="KW-0479">Metal-binding</keyword>
<keyword id="KW-0560">Oxidoreductase</keyword>
<keyword id="KW-0627">Porphyrin biosynthesis</keyword>
<keyword id="KW-1185">Reference proteome</keyword>
<evidence type="ECO:0000255" key="1">
    <source>
        <dbReference type="HAMAP-Rule" id="MF_00333"/>
    </source>
</evidence>
<proteinExistence type="inferred from homology"/>
<reference key="1">
    <citation type="journal article" date="2006" name="Nat. Biotechnol.">
        <title>Genome sequence of the ubiquitous hydrocarbon-degrading marine bacterium Alcanivorax borkumensis.</title>
        <authorList>
            <person name="Schneiker S."/>
            <person name="Martins dos Santos V.A.P."/>
            <person name="Bartels D."/>
            <person name="Bekel T."/>
            <person name="Brecht M."/>
            <person name="Buhrmester J."/>
            <person name="Chernikova T.N."/>
            <person name="Denaro R."/>
            <person name="Ferrer M."/>
            <person name="Gertler C."/>
            <person name="Goesmann A."/>
            <person name="Golyshina O.V."/>
            <person name="Kaminski F."/>
            <person name="Khachane A.N."/>
            <person name="Lang S."/>
            <person name="Linke B."/>
            <person name="McHardy A.C."/>
            <person name="Meyer F."/>
            <person name="Nechitaylo T."/>
            <person name="Puehler A."/>
            <person name="Regenhardt D."/>
            <person name="Rupp O."/>
            <person name="Sabirova J.S."/>
            <person name="Selbitschka W."/>
            <person name="Yakimov M.M."/>
            <person name="Timmis K.N."/>
            <person name="Vorhoelter F.-J."/>
            <person name="Weidner S."/>
            <person name="Kaiser O."/>
            <person name="Golyshin P.N."/>
        </authorList>
    </citation>
    <scope>NUCLEOTIDE SEQUENCE [LARGE SCALE GENOMIC DNA]</scope>
    <source>
        <strain>ATCC 700651 / DSM 11573 / NCIMB 13689 / SK2</strain>
    </source>
</reference>
<organism>
    <name type="scientific">Alcanivorax borkumensis (strain ATCC 700651 / DSM 11573 / NCIMB 13689 / SK2)</name>
    <dbReference type="NCBI Taxonomy" id="393595"/>
    <lineage>
        <taxon>Bacteria</taxon>
        <taxon>Pseudomonadati</taxon>
        <taxon>Pseudomonadota</taxon>
        <taxon>Gammaproteobacteria</taxon>
        <taxon>Oceanospirillales</taxon>
        <taxon>Alcanivoracaceae</taxon>
        <taxon>Alcanivorax</taxon>
    </lineage>
</organism>
<name>HEM6_ALCBS</name>
<sequence>MSEVSLQAVKDYLLDLQDRICDALGAEDGAATFREDSWEREQGGGGRSRVLENGAVIEKGGVNFSHVFGEQLPPSATEARPELAGRSFQAMGVSLVIHPKNPYVPTSHANVRFFVAEKEGEAPVWWFGGGFDLTPYYGFEEDVVHWHQTAKVACQPFGKEIYPEFKTWCDDYFYLKHRNEPRGVGGLFFDDLNRFDFDTSFALMRSIGDAYVPAYQPILARRKDHEFGDRERQFQLYRRGRYVEFNLVYDRGTIFGLQSGGRTESILMSLPPLVRWDYDYHPEPNSAESELYHKFLIHREWV</sequence>
<accession>Q0VTD7</accession>
<dbReference type="EC" id="1.3.3.3" evidence="1"/>
<dbReference type="EMBL" id="AM286690">
    <property type="protein sequence ID" value="CAL15583.1"/>
    <property type="molecule type" value="Genomic_DNA"/>
</dbReference>
<dbReference type="RefSeq" id="WP_011587433.1">
    <property type="nucleotide sequence ID" value="NC_008260.1"/>
</dbReference>
<dbReference type="SMR" id="Q0VTD7"/>
<dbReference type="STRING" id="393595.ABO_0135"/>
<dbReference type="KEGG" id="abo:ABO_0135"/>
<dbReference type="eggNOG" id="COG0408">
    <property type="taxonomic scope" value="Bacteria"/>
</dbReference>
<dbReference type="HOGENOM" id="CLU_026169_0_1_6"/>
<dbReference type="OrthoDB" id="9777553at2"/>
<dbReference type="UniPathway" id="UPA00251">
    <property type="reaction ID" value="UER00322"/>
</dbReference>
<dbReference type="Proteomes" id="UP000008871">
    <property type="component" value="Chromosome"/>
</dbReference>
<dbReference type="GO" id="GO:0005737">
    <property type="term" value="C:cytoplasm"/>
    <property type="evidence" value="ECO:0007669"/>
    <property type="project" value="UniProtKB-SubCell"/>
</dbReference>
<dbReference type="GO" id="GO:0004109">
    <property type="term" value="F:coproporphyrinogen oxidase activity"/>
    <property type="evidence" value="ECO:0007669"/>
    <property type="project" value="UniProtKB-UniRule"/>
</dbReference>
<dbReference type="GO" id="GO:0046872">
    <property type="term" value="F:metal ion binding"/>
    <property type="evidence" value="ECO:0007669"/>
    <property type="project" value="UniProtKB-KW"/>
</dbReference>
<dbReference type="GO" id="GO:0042803">
    <property type="term" value="F:protein homodimerization activity"/>
    <property type="evidence" value="ECO:0000250"/>
    <property type="project" value="UniProtKB"/>
</dbReference>
<dbReference type="GO" id="GO:0006782">
    <property type="term" value="P:protoporphyrinogen IX biosynthetic process"/>
    <property type="evidence" value="ECO:0007669"/>
    <property type="project" value="UniProtKB-UniRule"/>
</dbReference>
<dbReference type="FunFam" id="3.40.1500.10:FF:000001">
    <property type="entry name" value="Oxygen-dependent coproporphyrinogen-III oxidase"/>
    <property type="match status" value="1"/>
</dbReference>
<dbReference type="Gene3D" id="3.40.1500.10">
    <property type="entry name" value="Coproporphyrinogen III oxidase, aerobic"/>
    <property type="match status" value="1"/>
</dbReference>
<dbReference type="HAMAP" id="MF_00333">
    <property type="entry name" value="Coprogen_oxidas"/>
    <property type="match status" value="1"/>
</dbReference>
<dbReference type="InterPro" id="IPR001260">
    <property type="entry name" value="Coprogen_oxidase_aer"/>
</dbReference>
<dbReference type="InterPro" id="IPR036406">
    <property type="entry name" value="Coprogen_oxidase_aer_sf"/>
</dbReference>
<dbReference type="InterPro" id="IPR018375">
    <property type="entry name" value="Coprogen_oxidase_CS"/>
</dbReference>
<dbReference type="NCBIfam" id="NF003727">
    <property type="entry name" value="PRK05330.1"/>
    <property type="match status" value="1"/>
</dbReference>
<dbReference type="PANTHER" id="PTHR10755">
    <property type="entry name" value="COPROPORPHYRINOGEN III OXIDASE, MITOCHONDRIAL"/>
    <property type="match status" value="1"/>
</dbReference>
<dbReference type="PANTHER" id="PTHR10755:SF0">
    <property type="entry name" value="OXYGEN-DEPENDENT COPROPORPHYRINOGEN-III OXIDASE, MITOCHONDRIAL"/>
    <property type="match status" value="1"/>
</dbReference>
<dbReference type="Pfam" id="PF01218">
    <property type="entry name" value="Coprogen_oxidas"/>
    <property type="match status" value="1"/>
</dbReference>
<dbReference type="PIRSF" id="PIRSF000166">
    <property type="entry name" value="Coproporphyri_ox"/>
    <property type="match status" value="1"/>
</dbReference>
<dbReference type="PRINTS" id="PR00073">
    <property type="entry name" value="COPRGNOXDASE"/>
</dbReference>
<dbReference type="SUPFAM" id="SSF102886">
    <property type="entry name" value="Coproporphyrinogen III oxidase"/>
    <property type="match status" value="1"/>
</dbReference>
<dbReference type="PROSITE" id="PS01021">
    <property type="entry name" value="COPROGEN_OXIDASE"/>
    <property type="match status" value="1"/>
</dbReference>
<gene>
    <name evidence="1" type="primary">hemF</name>
    <name type="ordered locus">ABO_0135</name>
</gene>
<feature type="chain" id="PRO_1000119784" description="Oxygen-dependent coproporphyrinogen-III oxidase">
    <location>
        <begin position="1"/>
        <end position="302"/>
    </location>
</feature>
<feature type="region of interest" description="Important for dimerization" evidence="1">
    <location>
        <begin position="242"/>
        <end position="277"/>
    </location>
</feature>
<feature type="active site" description="Proton donor" evidence="1">
    <location>
        <position position="108"/>
    </location>
</feature>
<feature type="binding site" evidence="1">
    <location>
        <position position="94"/>
    </location>
    <ligand>
        <name>substrate</name>
    </ligand>
</feature>
<feature type="binding site" evidence="1">
    <location>
        <position position="98"/>
    </location>
    <ligand>
        <name>a divalent metal cation</name>
        <dbReference type="ChEBI" id="CHEBI:60240"/>
    </ligand>
</feature>
<feature type="binding site" evidence="1">
    <location>
        <position position="108"/>
    </location>
    <ligand>
        <name>a divalent metal cation</name>
        <dbReference type="ChEBI" id="CHEBI:60240"/>
    </ligand>
</feature>
<feature type="binding site" evidence="1">
    <location>
        <begin position="110"/>
        <end position="112"/>
    </location>
    <ligand>
        <name>substrate</name>
    </ligand>
</feature>
<feature type="binding site" evidence="1">
    <location>
        <position position="147"/>
    </location>
    <ligand>
        <name>a divalent metal cation</name>
        <dbReference type="ChEBI" id="CHEBI:60240"/>
    </ligand>
</feature>
<feature type="binding site" evidence="1">
    <location>
        <position position="177"/>
    </location>
    <ligand>
        <name>a divalent metal cation</name>
        <dbReference type="ChEBI" id="CHEBI:60240"/>
    </ligand>
</feature>
<feature type="binding site" evidence="1">
    <location>
        <begin position="260"/>
        <end position="262"/>
    </location>
    <ligand>
        <name>substrate</name>
    </ligand>
</feature>
<feature type="site" description="Important for dimerization" evidence="1">
    <location>
        <position position="177"/>
    </location>
</feature>
<protein>
    <recommendedName>
        <fullName evidence="1">Oxygen-dependent coproporphyrinogen-III oxidase</fullName>
        <shortName evidence="1">CPO</shortName>
        <shortName evidence="1">Coprogen oxidase</shortName>
        <shortName evidence="1">Coproporphyrinogenase</shortName>
        <ecNumber evidence="1">1.3.3.3</ecNumber>
    </recommendedName>
</protein>
<comment type="function">
    <text evidence="1">Involved in the heme biosynthesis. Catalyzes the aerobic oxidative decarboxylation of propionate groups of rings A and B of coproporphyrinogen-III to yield the vinyl groups in protoporphyrinogen-IX.</text>
</comment>
<comment type="catalytic activity">
    <reaction evidence="1">
        <text>coproporphyrinogen III + O2 + 2 H(+) = protoporphyrinogen IX + 2 CO2 + 2 H2O</text>
        <dbReference type="Rhea" id="RHEA:18257"/>
        <dbReference type="ChEBI" id="CHEBI:15377"/>
        <dbReference type="ChEBI" id="CHEBI:15378"/>
        <dbReference type="ChEBI" id="CHEBI:15379"/>
        <dbReference type="ChEBI" id="CHEBI:16526"/>
        <dbReference type="ChEBI" id="CHEBI:57307"/>
        <dbReference type="ChEBI" id="CHEBI:57309"/>
        <dbReference type="EC" id="1.3.3.3"/>
    </reaction>
</comment>
<comment type="cofactor">
    <cofactor evidence="1">
        <name>a divalent metal cation</name>
        <dbReference type="ChEBI" id="CHEBI:60240"/>
    </cofactor>
</comment>
<comment type="pathway">
    <text evidence="1">Porphyrin-containing compound metabolism; protoporphyrin-IX biosynthesis; protoporphyrinogen-IX from coproporphyrinogen-III (O2 route): step 1/1.</text>
</comment>
<comment type="subunit">
    <text evidence="1">Homodimer.</text>
</comment>
<comment type="subcellular location">
    <subcellularLocation>
        <location evidence="1">Cytoplasm</location>
    </subcellularLocation>
</comment>
<comment type="similarity">
    <text evidence="1">Belongs to the aerobic coproporphyrinogen-III oxidase family.</text>
</comment>